<protein>
    <recommendedName>
        <fullName evidence="1">tRNA pseudouridine synthase A</fullName>
        <ecNumber evidence="1">5.4.99.12</ecNumber>
    </recommendedName>
    <alternativeName>
        <fullName evidence="1">tRNA pseudouridine(38-40) synthase</fullName>
    </alternativeName>
    <alternativeName>
        <fullName evidence="1">tRNA pseudouridylate synthase I</fullName>
    </alternativeName>
    <alternativeName>
        <fullName evidence="1">tRNA-uridine isomerase I</fullName>
    </alternativeName>
</protein>
<evidence type="ECO:0000255" key="1">
    <source>
        <dbReference type="HAMAP-Rule" id="MF_00171"/>
    </source>
</evidence>
<sequence>MKRVAAVIEYDGSNFFGYQGQPDVRTVQGVIEDALERIFKQRIYTQAAGRTDAGVHANGQLIAFNCPNDRMTTEDIKNAMNANLPDDVYVKEVFEVSKNFHPRFDVKKRIYHYFILTSKQKNVFLRKYVWWFPYELDLDAMRKAAKYLEGTHDFTSFKTGSDERDPVRTIYRIRILRLKNDLVLIRVEGRSFLRRMVRNIVAALVKVGLKQWEPEKMKEVLEARDRSAAAGTAPAHGLYFYKVLF</sequence>
<name>TRUA_THESQ</name>
<accession>B1LB83</accession>
<reference key="1">
    <citation type="journal article" date="2011" name="J. Bacteriol.">
        <title>Genome sequence of Thermotoga sp. strain RQ2, a hyperthermophilic bacterium isolated from a geothermally heated region of the seafloor near Ribeira Quente, the Azores.</title>
        <authorList>
            <person name="Swithers K.S."/>
            <person name="DiPippo J.L."/>
            <person name="Bruce D.C."/>
            <person name="Detter C."/>
            <person name="Tapia R."/>
            <person name="Han S."/>
            <person name="Saunders E."/>
            <person name="Goodwin L.A."/>
            <person name="Han J."/>
            <person name="Woyke T."/>
            <person name="Pitluck S."/>
            <person name="Pennacchio L."/>
            <person name="Nolan M."/>
            <person name="Mikhailova N."/>
            <person name="Lykidis A."/>
            <person name="Land M.L."/>
            <person name="Brettin T."/>
            <person name="Stetter K.O."/>
            <person name="Nelson K.E."/>
            <person name="Gogarten J.P."/>
            <person name="Noll K.M."/>
        </authorList>
    </citation>
    <scope>NUCLEOTIDE SEQUENCE [LARGE SCALE GENOMIC DNA]</scope>
    <source>
        <strain>RQ2</strain>
    </source>
</reference>
<gene>
    <name evidence="1" type="primary">truA</name>
    <name type="ordered locus">TRQ2_1237</name>
</gene>
<proteinExistence type="inferred from homology"/>
<keyword id="KW-0413">Isomerase</keyword>
<keyword id="KW-0819">tRNA processing</keyword>
<comment type="function">
    <text evidence="1">Formation of pseudouridine at positions 38, 39 and 40 in the anticodon stem and loop of transfer RNAs.</text>
</comment>
<comment type="catalytic activity">
    <reaction evidence="1">
        <text>uridine(38/39/40) in tRNA = pseudouridine(38/39/40) in tRNA</text>
        <dbReference type="Rhea" id="RHEA:22376"/>
        <dbReference type="Rhea" id="RHEA-COMP:10085"/>
        <dbReference type="Rhea" id="RHEA-COMP:10087"/>
        <dbReference type="ChEBI" id="CHEBI:65314"/>
        <dbReference type="ChEBI" id="CHEBI:65315"/>
        <dbReference type="EC" id="5.4.99.12"/>
    </reaction>
</comment>
<comment type="subunit">
    <text evidence="1">Homodimer.</text>
</comment>
<comment type="similarity">
    <text evidence="1">Belongs to the tRNA pseudouridine synthase TruA family.</text>
</comment>
<feature type="chain" id="PRO_1000097800" description="tRNA pseudouridine synthase A">
    <location>
        <begin position="1"/>
        <end position="245"/>
    </location>
</feature>
<feature type="active site" description="Nucleophile" evidence="1">
    <location>
        <position position="52"/>
    </location>
</feature>
<feature type="binding site" evidence="1">
    <location>
        <position position="111"/>
    </location>
    <ligand>
        <name>substrate</name>
    </ligand>
</feature>
<dbReference type="EC" id="5.4.99.12" evidence="1"/>
<dbReference type="EMBL" id="CP000969">
    <property type="protein sequence ID" value="ACB09581.1"/>
    <property type="molecule type" value="Genomic_DNA"/>
</dbReference>
<dbReference type="RefSeq" id="WP_008194815.1">
    <property type="nucleotide sequence ID" value="NC_010483.1"/>
</dbReference>
<dbReference type="SMR" id="B1LB83"/>
<dbReference type="KEGG" id="trq:TRQ2_1237"/>
<dbReference type="HOGENOM" id="CLU_014673_0_1_0"/>
<dbReference type="Proteomes" id="UP000001687">
    <property type="component" value="Chromosome"/>
</dbReference>
<dbReference type="GO" id="GO:0003723">
    <property type="term" value="F:RNA binding"/>
    <property type="evidence" value="ECO:0007669"/>
    <property type="project" value="InterPro"/>
</dbReference>
<dbReference type="GO" id="GO:0160147">
    <property type="term" value="F:tRNA pseudouridine(38-40) synthase activity"/>
    <property type="evidence" value="ECO:0007669"/>
    <property type="project" value="UniProtKB-EC"/>
</dbReference>
<dbReference type="GO" id="GO:0031119">
    <property type="term" value="P:tRNA pseudouridine synthesis"/>
    <property type="evidence" value="ECO:0007669"/>
    <property type="project" value="UniProtKB-UniRule"/>
</dbReference>
<dbReference type="CDD" id="cd02570">
    <property type="entry name" value="PseudoU_synth_EcTruA"/>
    <property type="match status" value="1"/>
</dbReference>
<dbReference type="FunFam" id="3.30.70.580:FF:000001">
    <property type="entry name" value="tRNA pseudouridine synthase A"/>
    <property type="match status" value="1"/>
</dbReference>
<dbReference type="FunFam" id="3.30.70.660:FF:000026">
    <property type="entry name" value="tRNA pseudouridine synthase A"/>
    <property type="match status" value="1"/>
</dbReference>
<dbReference type="Gene3D" id="3.30.70.660">
    <property type="entry name" value="Pseudouridine synthase I, catalytic domain, C-terminal subdomain"/>
    <property type="match status" value="1"/>
</dbReference>
<dbReference type="Gene3D" id="3.30.70.580">
    <property type="entry name" value="Pseudouridine synthase I, catalytic domain, N-terminal subdomain"/>
    <property type="match status" value="1"/>
</dbReference>
<dbReference type="HAMAP" id="MF_00171">
    <property type="entry name" value="TruA"/>
    <property type="match status" value="1"/>
</dbReference>
<dbReference type="InterPro" id="IPR020103">
    <property type="entry name" value="PsdUridine_synth_cat_dom_sf"/>
</dbReference>
<dbReference type="InterPro" id="IPR001406">
    <property type="entry name" value="PsdUridine_synth_TruA"/>
</dbReference>
<dbReference type="InterPro" id="IPR020097">
    <property type="entry name" value="PsdUridine_synth_TruA_a/b_dom"/>
</dbReference>
<dbReference type="InterPro" id="IPR020095">
    <property type="entry name" value="PsdUridine_synth_TruA_C"/>
</dbReference>
<dbReference type="InterPro" id="IPR020094">
    <property type="entry name" value="TruA/RsuA/RluB/E/F_N"/>
</dbReference>
<dbReference type="NCBIfam" id="TIGR00071">
    <property type="entry name" value="hisT_truA"/>
    <property type="match status" value="1"/>
</dbReference>
<dbReference type="PANTHER" id="PTHR11142">
    <property type="entry name" value="PSEUDOURIDYLATE SYNTHASE"/>
    <property type="match status" value="1"/>
</dbReference>
<dbReference type="PANTHER" id="PTHR11142:SF0">
    <property type="entry name" value="TRNA PSEUDOURIDINE SYNTHASE-LIKE 1"/>
    <property type="match status" value="1"/>
</dbReference>
<dbReference type="Pfam" id="PF01416">
    <property type="entry name" value="PseudoU_synth_1"/>
    <property type="match status" value="2"/>
</dbReference>
<dbReference type="PIRSF" id="PIRSF001430">
    <property type="entry name" value="tRNA_psdUrid_synth"/>
    <property type="match status" value="1"/>
</dbReference>
<dbReference type="SUPFAM" id="SSF55120">
    <property type="entry name" value="Pseudouridine synthase"/>
    <property type="match status" value="1"/>
</dbReference>
<organism>
    <name type="scientific">Thermotoga sp. (strain RQ2)</name>
    <dbReference type="NCBI Taxonomy" id="126740"/>
    <lineage>
        <taxon>Bacteria</taxon>
        <taxon>Thermotogati</taxon>
        <taxon>Thermotogota</taxon>
        <taxon>Thermotogae</taxon>
        <taxon>Thermotogales</taxon>
        <taxon>Thermotogaceae</taxon>
        <taxon>Thermotoga</taxon>
    </lineage>
</organism>